<feature type="transit peptide" description="Mitochondrion" evidence="4 7">
    <location>
        <begin position="1"/>
        <end position="19"/>
    </location>
</feature>
<feature type="chain" id="PRO_0000030536" description="Large ribosomal subunit protein uL3m">
    <location>
        <begin position="20"/>
        <end position="269"/>
    </location>
</feature>
<feature type="sequence conflict" description="In Ref. 6; AA sequence." evidence="9" ref="6">
    <original>S</original>
    <variation>V</variation>
    <location>
        <position position="21"/>
    </location>
</feature>
<feature type="sequence conflict" description="In Ref. 1; CAA46148." evidence="9" ref="1">
    <original>E</original>
    <variation>Q</variation>
    <location>
        <position position="139"/>
    </location>
</feature>
<accession>P31334</accession>
<accession>D6VV02</accession>
<comment type="function">
    <text evidence="10 11">Component of the mitochondrial ribosome (mitoribosome), a dedicated translation machinery responsible for the synthesis of mitochondrial genome-encoded proteins, including at least some of the essential transmembrane subunits of the mitochondrial respiratory chain. The mitoribosomes are attached to the mitochondrial inner membrane and translation products are cotranslationally integrated into the membrane.</text>
</comment>
<comment type="subunit">
    <text evidence="5 7">Component of the mitochondrial large ribosomal subunit (mt-LSU). Mature yeast 74S mitochondrial ribosomes consist of a small (37S) and a large (54S) subunit. The 37S small subunit contains a 15S ribosomal RNA (15S mt-rRNA) and 34 different proteins. The 54S large subunit contains a 21S rRNA (21S mt-rRNA) and 46 different proteins.</text>
</comment>
<comment type="subcellular location">
    <subcellularLocation>
        <location evidence="1 3">Mitochondrion</location>
    </subcellularLocation>
    <text evidence="6">Mitoribosomes are tethered to the mitochondrial inner membrane and spatially aligned with the membrane insertion machinery through two distinct membrane contact sites, formed by the 21S rRNA expansion segment 96-ES1 and the inner membrane protein MBA1.</text>
</comment>
<comment type="miscellaneous">
    <text evidence="2">Present with 3200 molecules/cell in log phase SD medium.</text>
</comment>
<comment type="similarity">
    <text evidence="9">Belongs to the universal ribosomal protein uL3 family.</text>
</comment>
<proteinExistence type="evidence at protein level"/>
<gene>
    <name type="primary">MRPL9</name>
    <name type="ordered locus">YGR220C</name>
    <name type="ORF">G8520</name>
</gene>
<protein>
    <recommendedName>
        <fullName evidence="8">Large ribosomal subunit protein uL3m</fullName>
    </recommendedName>
    <alternativeName>
        <fullName>54S ribosomal protein L9, mitochondrial</fullName>
    </alternativeName>
    <alternativeName>
        <fullName>YmL9</fullName>
    </alternativeName>
</protein>
<name>RM09_YEAST</name>
<organism>
    <name type="scientific">Saccharomyces cerevisiae (strain ATCC 204508 / S288c)</name>
    <name type="common">Baker's yeast</name>
    <dbReference type="NCBI Taxonomy" id="559292"/>
    <lineage>
        <taxon>Eukaryota</taxon>
        <taxon>Fungi</taxon>
        <taxon>Dikarya</taxon>
        <taxon>Ascomycota</taxon>
        <taxon>Saccharomycotina</taxon>
        <taxon>Saccharomycetes</taxon>
        <taxon>Saccharomycetales</taxon>
        <taxon>Saccharomycetaceae</taxon>
        <taxon>Saccharomyces</taxon>
    </lineage>
</organism>
<reference key="1">
    <citation type="journal article" date="1992" name="Eur. J. Biochem.">
        <title>YmL9, a nucleus-encoded mitochondrial ribosomal protein of yeast, is homologous to L3 ribosomal proteins from all natural kingdoms and photosynthetic organelles.</title>
        <authorList>
            <person name="Graack H.-R."/>
            <person name="Grohmann L."/>
            <person name="Kitakawa M."/>
            <person name="Schaefer K.L."/>
            <person name="Kruft V."/>
        </authorList>
    </citation>
    <scope>NUCLEOTIDE SEQUENCE [GENOMIC DNA]</scope>
    <scope>PROTEIN SEQUENCE OF 20-53; 176-182 AND 257-261</scope>
    <source>
        <strain>07173</strain>
    </source>
</reference>
<reference key="2">
    <citation type="journal article" date="1996" name="Yeast">
        <title>Sequence analysis of the 43 kb CRM1-YLM9-PET54-DIE2-SMI1-PHO81-YHB4-PFK1 region from the right arm of Saccharomyces cerevisiae chromosome VII.</title>
        <authorList>
            <person name="van der Aart Q.J.M."/>
            <person name="Kleine K."/>
            <person name="Steensma H.Y."/>
        </authorList>
    </citation>
    <scope>NUCLEOTIDE SEQUENCE [GENOMIC DNA]</scope>
    <source>
        <strain>ATCC 204508 / S288c</strain>
    </source>
</reference>
<reference key="3">
    <citation type="journal article" date="1997" name="Nature">
        <title>The nucleotide sequence of Saccharomyces cerevisiae chromosome VII.</title>
        <authorList>
            <person name="Tettelin H."/>
            <person name="Agostoni-Carbone M.L."/>
            <person name="Albermann K."/>
            <person name="Albers M."/>
            <person name="Arroyo J."/>
            <person name="Backes U."/>
            <person name="Barreiros T."/>
            <person name="Bertani I."/>
            <person name="Bjourson A.J."/>
            <person name="Brueckner M."/>
            <person name="Bruschi C.V."/>
            <person name="Carignani G."/>
            <person name="Castagnoli L."/>
            <person name="Cerdan E."/>
            <person name="Clemente M.L."/>
            <person name="Coblenz A."/>
            <person name="Coglievina M."/>
            <person name="Coissac E."/>
            <person name="Defoor E."/>
            <person name="Del Bino S."/>
            <person name="Delius H."/>
            <person name="Delneri D."/>
            <person name="de Wergifosse P."/>
            <person name="Dujon B."/>
            <person name="Durand P."/>
            <person name="Entian K.-D."/>
            <person name="Eraso P."/>
            <person name="Escribano V."/>
            <person name="Fabiani L."/>
            <person name="Fartmann B."/>
            <person name="Feroli F."/>
            <person name="Feuermann M."/>
            <person name="Frontali L."/>
            <person name="Garcia-Gonzalez M."/>
            <person name="Garcia-Saez M.I."/>
            <person name="Goffeau A."/>
            <person name="Guerreiro P."/>
            <person name="Hani J."/>
            <person name="Hansen M."/>
            <person name="Hebling U."/>
            <person name="Hernandez K."/>
            <person name="Heumann K."/>
            <person name="Hilger F."/>
            <person name="Hofmann B."/>
            <person name="Indge K.J."/>
            <person name="James C.M."/>
            <person name="Klima R."/>
            <person name="Koetter P."/>
            <person name="Kramer B."/>
            <person name="Kramer W."/>
            <person name="Lauquin G."/>
            <person name="Leuther H."/>
            <person name="Louis E.J."/>
            <person name="Maillier E."/>
            <person name="Marconi A."/>
            <person name="Martegani E."/>
            <person name="Mazon M.J."/>
            <person name="Mazzoni C."/>
            <person name="McReynolds A.D.K."/>
            <person name="Melchioretto P."/>
            <person name="Mewes H.-W."/>
            <person name="Minenkova O."/>
            <person name="Mueller-Auer S."/>
            <person name="Nawrocki A."/>
            <person name="Netter P."/>
            <person name="Neu R."/>
            <person name="Nombela C."/>
            <person name="Oliver S.G."/>
            <person name="Panzeri L."/>
            <person name="Paoluzi S."/>
            <person name="Plevani P."/>
            <person name="Portetelle D."/>
            <person name="Portillo F."/>
            <person name="Potier S."/>
            <person name="Purnelle B."/>
            <person name="Rieger M."/>
            <person name="Riles L."/>
            <person name="Rinaldi T."/>
            <person name="Robben J."/>
            <person name="Rodrigues-Pousada C."/>
            <person name="Rodriguez-Belmonte E."/>
            <person name="Rodriguez-Torres A.M."/>
            <person name="Rose M."/>
            <person name="Ruzzi M."/>
            <person name="Saliola M."/>
            <person name="Sanchez-Perez M."/>
            <person name="Schaefer B."/>
            <person name="Schaefer M."/>
            <person name="Scharfe M."/>
            <person name="Schmidheini T."/>
            <person name="Schreer A."/>
            <person name="Skala J."/>
            <person name="Souciet J.-L."/>
            <person name="Steensma H.Y."/>
            <person name="Talla E."/>
            <person name="Thierry A."/>
            <person name="Vandenbol M."/>
            <person name="van der Aart Q.J.M."/>
            <person name="Van Dyck L."/>
            <person name="Vanoni M."/>
            <person name="Verhasselt P."/>
            <person name="Voet M."/>
            <person name="Volckaert G."/>
            <person name="Wambutt R."/>
            <person name="Watson M.D."/>
            <person name="Weber N."/>
            <person name="Wedler E."/>
            <person name="Wedler H."/>
            <person name="Wipfli P."/>
            <person name="Wolf K."/>
            <person name="Wright L.F."/>
            <person name="Zaccaria P."/>
            <person name="Zimmermann M."/>
            <person name="Zollner A."/>
            <person name="Kleine K."/>
        </authorList>
    </citation>
    <scope>NUCLEOTIDE SEQUENCE [LARGE SCALE GENOMIC DNA]</scope>
    <source>
        <strain>ATCC 204508 / S288c</strain>
    </source>
</reference>
<reference key="4">
    <citation type="journal article" date="2014" name="G3 (Bethesda)">
        <title>The reference genome sequence of Saccharomyces cerevisiae: Then and now.</title>
        <authorList>
            <person name="Engel S.R."/>
            <person name="Dietrich F.S."/>
            <person name="Fisk D.G."/>
            <person name="Binkley G."/>
            <person name="Balakrishnan R."/>
            <person name="Costanzo M.C."/>
            <person name="Dwight S.S."/>
            <person name="Hitz B.C."/>
            <person name="Karra K."/>
            <person name="Nash R.S."/>
            <person name="Weng S."/>
            <person name="Wong E.D."/>
            <person name="Lloyd P."/>
            <person name="Skrzypek M.S."/>
            <person name="Miyasato S.R."/>
            <person name="Simison M."/>
            <person name="Cherry J.M."/>
        </authorList>
    </citation>
    <scope>GENOME REANNOTATION</scope>
    <source>
        <strain>ATCC 204508 / S288c</strain>
    </source>
</reference>
<reference key="5">
    <citation type="journal article" date="2007" name="Genome Res.">
        <title>Approaching a complete repository of sequence-verified protein-encoding clones for Saccharomyces cerevisiae.</title>
        <authorList>
            <person name="Hu Y."/>
            <person name="Rolfs A."/>
            <person name="Bhullar B."/>
            <person name="Murthy T.V.S."/>
            <person name="Zhu C."/>
            <person name="Berger M.F."/>
            <person name="Camargo A.A."/>
            <person name="Kelley F."/>
            <person name="McCarron S."/>
            <person name="Jepson D."/>
            <person name="Richardson A."/>
            <person name="Raphael J."/>
            <person name="Moreira D."/>
            <person name="Taycher E."/>
            <person name="Zuo D."/>
            <person name="Mohr S."/>
            <person name="Kane M.F."/>
            <person name="Williamson J."/>
            <person name="Simpson A.J.G."/>
            <person name="Bulyk M.L."/>
            <person name="Harlow E."/>
            <person name="Marsischky G."/>
            <person name="Kolodner R.D."/>
            <person name="LaBaer J."/>
        </authorList>
    </citation>
    <scope>NUCLEOTIDE SEQUENCE [GENOMIC DNA]</scope>
    <source>
        <strain>ATCC 204508 / S288c</strain>
    </source>
</reference>
<reference key="6">
    <citation type="journal article" date="1988" name="FEBS Lett.">
        <title>Mitochondrial ribosomes of yeast: isolation of individual proteins and N-terminal sequencing.</title>
        <authorList>
            <person name="Graack H.-R."/>
            <person name="Grohmann L."/>
            <person name="Choli T."/>
        </authorList>
    </citation>
    <scope>PROTEIN SEQUENCE OF 20-53</scope>
    <scope>SUBUNIT</scope>
    <source>
        <strain>07173</strain>
    </source>
</reference>
<reference key="7">
    <citation type="journal article" date="2003" name="Nature">
        <title>Global analysis of protein localization in budding yeast.</title>
        <authorList>
            <person name="Huh W.-K."/>
            <person name="Falvo J.V."/>
            <person name="Gerke L.C."/>
            <person name="Carroll A.S."/>
            <person name="Howson R.W."/>
            <person name="Weissman J.S."/>
            <person name="O'Shea E.K."/>
        </authorList>
    </citation>
    <scope>SUBCELLULAR LOCATION [LARGE SCALE ANALYSIS]</scope>
</reference>
<reference key="8">
    <citation type="journal article" date="2003" name="Nature">
        <title>Global analysis of protein expression in yeast.</title>
        <authorList>
            <person name="Ghaemmaghami S."/>
            <person name="Huh W.-K."/>
            <person name="Bower K."/>
            <person name="Howson R.W."/>
            <person name="Belle A."/>
            <person name="Dephoure N."/>
            <person name="O'Shea E.K."/>
            <person name="Weissman J.S."/>
        </authorList>
    </citation>
    <scope>LEVEL OF PROTEIN EXPRESSION [LARGE SCALE ANALYSIS]</scope>
</reference>
<reference key="9">
    <citation type="journal article" date="2003" name="Proc. Natl. Acad. Sci. U.S.A.">
        <title>The proteome of Saccharomyces cerevisiae mitochondria.</title>
        <authorList>
            <person name="Sickmann A."/>
            <person name="Reinders J."/>
            <person name="Wagner Y."/>
            <person name="Joppich C."/>
            <person name="Zahedi R.P."/>
            <person name="Meyer H.E."/>
            <person name="Schoenfisch B."/>
            <person name="Perschil I."/>
            <person name="Chacinska A."/>
            <person name="Guiard B."/>
            <person name="Rehling P."/>
            <person name="Pfanner N."/>
            <person name="Meisinger C."/>
        </authorList>
    </citation>
    <scope>SUBCELLULAR LOCATION [LARGE SCALE ANALYSIS]</scope>
    <source>
        <strain>ATCC 76625 / YPH499</strain>
    </source>
</reference>
<reference key="10">
    <citation type="journal article" date="2015" name="Nat. Commun.">
        <title>Organization of the mitochondrial translation machinery studied in situ by cryoelectron tomography.</title>
        <authorList>
            <person name="Pfeffer S."/>
            <person name="Woellhaf M.W."/>
            <person name="Herrmann J.M."/>
            <person name="Forster F."/>
        </authorList>
    </citation>
    <scope>SUBCELLULAR LOCATION</scope>
</reference>
<reference key="11">
    <citation type="journal article" date="2014" name="Science">
        <title>Structure of the yeast mitochondrial large ribosomal subunit.</title>
        <authorList>
            <person name="Amunts A."/>
            <person name="Brown A."/>
            <person name="Bai X.C."/>
            <person name="Llacer J.L."/>
            <person name="Hussain T."/>
            <person name="Emsley P."/>
            <person name="Long F."/>
            <person name="Murshudov G."/>
            <person name="Scheres S.H."/>
            <person name="Ramakrishnan V."/>
        </authorList>
    </citation>
    <scope>STRUCTURE BY ELECTRON MICROSCOPY (3.20 ANGSTROMS)</scope>
    <scope>SUBUNIT</scope>
</reference>
<dbReference type="EMBL" id="X65014">
    <property type="protein sequence ID" value="CAA46148.1"/>
    <property type="molecule type" value="Genomic_DNA"/>
</dbReference>
<dbReference type="EMBL" id="X87941">
    <property type="protein sequence ID" value="CAA61168.1"/>
    <property type="molecule type" value="Genomic_DNA"/>
</dbReference>
<dbReference type="EMBL" id="Z73004">
    <property type="protein sequence ID" value="CAA97248.1"/>
    <property type="molecule type" value="Genomic_DNA"/>
</dbReference>
<dbReference type="EMBL" id="AY558274">
    <property type="protein sequence ID" value="AAS56600.1"/>
    <property type="molecule type" value="Genomic_DNA"/>
</dbReference>
<dbReference type="EMBL" id="BK006941">
    <property type="protein sequence ID" value="DAA08313.1"/>
    <property type="molecule type" value="Genomic_DNA"/>
</dbReference>
<dbReference type="PIR" id="S23455">
    <property type="entry name" value="R5BYL3"/>
</dbReference>
<dbReference type="RefSeq" id="NP_011736.1">
    <property type="nucleotide sequence ID" value="NM_001181349.1"/>
</dbReference>
<dbReference type="PDB" id="3J6B">
    <property type="method" value="EM"/>
    <property type="resolution" value="3.20 A"/>
    <property type="chains" value="C=1-269"/>
</dbReference>
<dbReference type="PDB" id="5MRC">
    <property type="method" value="EM"/>
    <property type="resolution" value="3.25 A"/>
    <property type="chains" value="C=21-269"/>
</dbReference>
<dbReference type="PDB" id="5MRE">
    <property type="method" value="EM"/>
    <property type="resolution" value="3.75 A"/>
    <property type="chains" value="C=21-269"/>
</dbReference>
<dbReference type="PDB" id="5MRF">
    <property type="method" value="EM"/>
    <property type="resolution" value="4.97 A"/>
    <property type="chains" value="C=21-269"/>
</dbReference>
<dbReference type="PDBsum" id="3J6B"/>
<dbReference type="PDBsum" id="5MRC"/>
<dbReference type="PDBsum" id="5MRE"/>
<dbReference type="PDBsum" id="5MRF"/>
<dbReference type="EMDB" id="EMD-3551"/>
<dbReference type="EMDB" id="EMD-3552"/>
<dbReference type="EMDB" id="EMD-3553"/>
<dbReference type="SMR" id="P31334"/>
<dbReference type="BioGRID" id="33473">
    <property type="interactions" value="190"/>
</dbReference>
<dbReference type="ComplexPortal" id="CPX-1602">
    <property type="entry name" value="54S mitochondrial large ribosomal subunit"/>
</dbReference>
<dbReference type="DIP" id="DIP-6806N"/>
<dbReference type="FunCoup" id="P31334">
    <property type="interactions" value="1060"/>
</dbReference>
<dbReference type="IntAct" id="P31334">
    <property type="interactions" value="86"/>
</dbReference>
<dbReference type="MINT" id="P31334"/>
<dbReference type="STRING" id="4932.YGR220C"/>
<dbReference type="iPTMnet" id="P31334"/>
<dbReference type="PaxDb" id="4932-YGR220C"/>
<dbReference type="PeptideAtlas" id="P31334"/>
<dbReference type="EnsemblFungi" id="YGR220C_mRNA">
    <property type="protein sequence ID" value="YGR220C"/>
    <property type="gene ID" value="YGR220C"/>
</dbReference>
<dbReference type="GeneID" id="853135"/>
<dbReference type="KEGG" id="sce:YGR220C"/>
<dbReference type="AGR" id="SGD:S000003452"/>
<dbReference type="SGD" id="S000003452">
    <property type="gene designation" value="MRPL9"/>
</dbReference>
<dbReference type="VEuPathDB" id="FungiDB:YGR220C"/>
<dbReference type="eggNOG" id="KOG3141">
    <property type="taxonomic scope" value="Eukaryota"/>
</dbReference>
<dbReference type="GeneTree" id="ENSGT00390000011422"/>
<dbReference type="HOGENOM" id="CLU_044142_4_1_1"/>
<dbReference type="InParanoid" id="P31334"/>
<dbReference type="OMA" id="GKNIPCT"/>
<dbReference type="OrthoDB" id="274683at2759"/>
<dbReference type="BioCyc" id="YEAST:G3O-30901-MONOMER"/>
<dbReference type="BioGRID-ORCS" id="853135">
    <property type="hits" value="2 hits in 10 CRISPR screens"/>
</dbReference>
<dbReference type="PRO" id="PR:P31334"/>
<dbReference type="Proteomes" id="UP000002311">
    <property type="component" value="Chromosome VII"/>
</dbReference>
<dbReference type="RNAct" id="P31334">
    <property type="molecule type" value="protein"/>
</dbReference>
<dbReference type="GO" id="GO:0005743">
    <property type="term" value="C:mitochondrial inner membrane"/>
    <property type="evidence" value="ECO:0000303"/>
    <property type="project" value="ComplexPortal"/>
</dbReference>
<dbReference type="GO" id="GO:0005762">
    <property type="term" value="C:mitochondrial large ribosomal subunit"/>
    <property type="evidence" value="ECO:0000314"/>
    <property type="project" value="SGD"/>
</dbReference>
<dbReference type="GO" id="GO:0005739">
    <property type="term" value="C:mitochondrion"/>
    <property type="evidence" value="ECO:0007005"/>
    <property type="project" value="SGD"/>
</dbReference>
<dbReference type="GO" id="GO:0003735">
    <property type="term" value="F:structural constituent of ribosome"/>
    <property type="evidence" value="ECO:0000314"/>
    <property type="project" value="SGD"/>
</dbReference>
<dbReference type="GO" id="GO:0032543">
    <property type="term" value="P:mitochondrial translation"/>
    <property type="evidence" value="ECO:0000303"/>
    <property type="project" value="ComplexPortal"/>
</dbReference>
<dbReference type="FunFam" id="2.40.30.10:FF:000004">
    <property type="entry name" value="50S ribosomal protein L3"/>
    <property type="match status" value="1"/>
</dbReference>
<dbReference type="FunFam" id="2.40.30.10:FF:000171">
    <property type="entry name" value="Mrpl9p"/>
    <property type="match status" value="1"/>
</dbReference>
<dbReference type="Gene3D" id="2.40.30.10">
    <property type="entry name" value="Translation factors"/>
    <property type="match status" value="2"/>
</dbReference>
<dbReference type="HAMAP" id="MF_01325_B">
    <property type="entry name" value="Ribosomal_uL3_B"/>
    <property type="match status" value="1"/>
</dbReference>
<dbReference type="InterPro" id="IPR000597">
    <property type="entry name" value="Ribosomal_uL3"/>
</dbReference>
<dbReference type="InterPro" id="IPR019927">
    <property type="entry name" value="Ribosomal_uL3_bac/org-type"/>
</dbReference>
<dbReference type="InterPro" id="IPR019926">
    <property type="entry name" value="Ribosomal_uL3_CS"/>
</dbReference>
<dbReference type="InterPro" id="IPR009000">
    <property type="entry name" value="Transl_B-barrel_sf"/>
</dbReference>
<dbReference type="NCBIfam" id="TIGR03625">
    <property type="entry name" value="L3_bact"/>
    <property type="match status" value="1"/>
</dbReference>
<dbReference type="PANTHER" id="PTHR11229">
    <property type="entry name" value="50S RIBOSOMAL PROTEIN L3"/>
    <property type="match status" value="1"/>
</dbReference>
<dbReference type="PANTHER" id="PTHR11229:SF8">
    <property type="entry name" value="LARGE RIBOSOMAL SUBUNIT PROTEIN UL3M"/>
    <property type="match status" value="1"/>
</dbReference>
<dbReference type="Pfam" id="PF00297">
    <property type="entry name" value="Ribosomal_L3"/>
    <property type="match status" value="1"/>
</dbReference>
<dbReference type="SUPFAM" id="SSF50447">
    <property type="entry name" value="Translation proteins"/>
    <property type="match status" value="1"/>
</dbReference>
<dbReference type="PROSITE" id="PS00474">
    <property type="entry name" value="RIBOSOMAL_L3"/>
    <property type="match status" value="1"/>
</dbReference>
<sequence>MSKFLQGSIFSISKLHVRYSSTRPFLVAPSIANSITTEAPAINHSPELANARKWLPKRCGLITRKKGMMPYFDKSTGERSAATILEVNNVEVIMHRTSEVNGYFACQVGYGSRHLSKVSRQMLGHFASKVVNPKEHVAEFRVKDEKGLIPPGTLLKPSFFKEGQYVDVRSVSKGKGFTGVMKRYGFKGLRASHGTSIMHRHGGSYGQNQDPGRVLPGRKMPGHMGNEHVTIQNVKVLKVDDENNVIWVKGSVAGPKNSFVKIQDAIKKT</sequence>
<evidence type="ECO:0000269" key="1">
    <source>
    </source>
</evidence>
<evidence type="ECO:0000269" key="2">
    <source>
    </source>
</evidence>
<evidence type="ECO:0000269" key="3">
    <source>
    </source>
</evidence>
<evidence type="ECO:0000269" key="4">
    <source>
    </source>
</evidence>
<evidence type="ECO:0000269" key="5">
    <source>
    </source>
</evidence>
<evidence type="ECO:0000269" key="6">
    <source>
    </source>
</evidence>
<evidence type="ECO:0000269" key="7">
    <source>
    </source>
</evidence>
<evidence type="ECO:0000303" key="8">
    <source>
    </source>
</evidence>
<evidence type="ECO:0000305" key="9"/>
<evidence type="ECO:0000305" key="10">
    <source>
    </source>
</evidence>
<evidence type="ECO:0000305" key="11">
    <source>
    </source>
</evidence>
<keyword id="KW-0002">3D-structure</keyword>
<keyword id="KW-0903">Direct protein sequencing</keyword>
<keyword id="KW-0496">Mitochondrion</keyword>
<keyword id="KW-1185">Reference proteome</keyword>
<keyword id="KW-0687">Ribonucleoprotein</keyword>
<keyword id="KW-0689">Ribosomal protein</keyword>
<keyword id="KW-0809">Transit peptide</keyword>